<protein>
    <recommendedName>
        <fullName evidence="1">Aspartyl/glutamyl-tRNA(Asn/Gln) amidotransferase subunit B</fullName>
        <shortName evidence="1">Asp/Glu-ADT subunit B</shortName>
        <ecNumber evidence="1">6.3.5.-</ecNumber>
    </recommendedName>
</protein>
<organism>
    <name type="scientific">Rickettsia conorii (strain ATCC VR-613 / Malish 7)</name>
    <dbReference type="NCBI Taxonomy" id="272944"/>
    <lineage>
        <taxon>Bacteria</taxon>
        <taxon>Pseudomonadati</taxon>
        <taxon>Pseudomonadota</taxon>
        <taxon>Alphaproteobacteria</taxon>
        <taxon>Rickettsiales</taxon>
        <taxon>Rickettsiaceae</taxon>
        <taxon>Rickettsieae</taxon>
        <taxon>Rickettsia</taxon>
        <taxon>spotted fever group</taxon>
    </lineage>
</organism>
<accession>Q92J76</accession>
<gene>
    <name evidence="1" type="primary">gatB</name>
    <name type="ordered locus">RC0193</name>
</gene>
<reference key="1">
    <citation type="journal article" date="2001" name="Science">
        <title>Mechanisms of evolution in Rickettsia conorii and R. prowazekii.</title>
        <authorList>
            <person name="Ogata H."/>
            <person name="Audic S."/>
            <person name="Renesto-Audiffren P."/>
            <person name="Fournier P.-E."/>
            <person name="Barbe V."/>
            <person name="Samson D."/>
            <person name="Roux V."/>
            <person name="Cossart P."/>
            <person name="Weissenbach J."/>
            <person name="Claverie J.-M."/>
            <person name="Raoult D."/>
        </authorList>
    </citation>
    <scope>NUCLEOTIDE SEQUENCE [LARGE SCALE GENOMIC DNA]</scope>
    <source>
        <strain>ATCC VR-613 / Malish 7</strain>
    </source>
</reference>
<name>GATB_RICCN</name>
<feature type="chain" id="PRO_0000148831" description="Aspartyl/glutamyl-tRNA(Asn/Gln) amidotransferase subunit B">
    <location>
        <begin position="1"/>
        <end position="483"/>
    </location>
</feature>
<proteinExistence type="inferred from homology"/>
<comment type="function">
    <text evidence="1">Allows the formation of correctly charged Asn-tRNA(Asn) or Gln-tRNA(Gln) through the transamidation of misacylated Asp-tRNA(Asn) or Glu-tRNA(Gln) in organisms which lack either or both of asparaginyl-tRNA or glutaminyl-tRNA synthetases. The reaction takes place in the presence of glutamine and ATP through an activated phospho-Asp-tRNA(Asn) or phospho-Glu-tRNA(Gln).</text>
</comment>
<comment type="catalytic activity">
    <reaction evidence="1">
        <text>L-glutamyl-tRNA(Gln) + L-glutamine + ATP + H2O = L-glutaminyl-tRNA(Gln) + L-glutamate + ADP + phosphate + H(+)</text>
        <dbReference type="Rhea" id="RHEA:17521"/>
        <dbReference type="Rhea" id="RHEA-COMP:9681"/>
        <dbReference type="Rhea" id="RHEA-COMP:9684"/>
        <dbReference type="ChEBI" id="CHEBI:15377"/>
        <dbReference type="ChEBI" id="CHEBI:15378"/>
        <dbReference type="ChEBI" id="CHEBI:29985"/>
        <dbReference type="ChEBI" id="CHEBI:30616"/>
        <dbReference type="ChEBI" id="CHEBI:43474"/>
        <dbReference type="ChEBI" id="CHEBI:58359"/>
        <dbReference type="ChEBI" id="CHEBI:78520"/>
        <dbReference type="ChEBI" id="CHEBI:78521"/>
        <dbReference type="ChEBI" id="CHEBI:456216"/>
    </reaction>
</comment>
<comment type="catalytic activity">
    <reaction evidence="1">
        <text>L-aspartyl-tRNA(Asn) + L-glutamine + ATP + H2O = L-asparaginyl-tRNA(Asn) + L-glutamate + ADP + phosphate + 2 H(+)</text>
        <dbReference type="Rhea" id="RHEA:14513"/>
        <dbReference type="Rhea" id="RHEA-COMP:9674"/>
        <dbReference type="Rhea" id="RHEA-COMP:9677"/>
        <dbReference type="ChEBI" id="CHEBI:15377"/>
        <dbReference type="ChEBI" id="CHEBI:15378"/>
        <dbReference type="ChEBI" id="CHEBI:29985"/>
        <dbReference type="ChEBI" id="CHEBI:30616"/>
        <dbReference type="ChEBI" id="CHEBI:43474"/>
        <dbReference type="ChEBI" id="CHEBI:58359"/>
        <dbReference type="ChEBI" id="CHEBI:78515"/>
        <dbReference type="ChEBI" id="CHEBI:78516"/>
        <dbReference type="ChEBI" id="CHEBI:456216"/>
    </reaction>
</comment>
<comment type="subunit">
    <text evidence="1">Heterotrimer of A, B and C subunits.</text>
</comment>
<comment type="similarity">
    <text evidence="1">Belongs to the GatB/GatE family. GatB subfamily.</text>
</comment>
<keyword id="KW-0067">ATP-binding</keyword>
<keyword id="KW-0436">Ligase</keyword>
<keyword id="KW-0547">Nucleotide-binding</keyword>
<keyword id="KW-0648">Protein biosynthesis</keyword>
<sequence>MAYIEGNTGKWEYVIGLEIHAQISSKSKLFSGSSTIFAANPNSQVSYVDAAMPGMLPVLNKHCVHQAIKTGLGLKAKINKYSVFDRKNYFYADLPQGYQISQFYYPIVQNGTMEIPTSTGDLKTIRINRLHLEQDAGKSMHDQSPHYSFIDLNRAGIGLMEIVTEPDISSPEEAAEFVKKLRNLLRYIGSCDGDMEKGSMRCDANISVRRSGEPLGTRCEIKNINSIRNIIKAIEFEAKRQVDLLESGEKIIQETRLFNADSGETRTMRLKEEALDYRYFPDPDLLPLVISDELINELKANLPELPDQKIEKYTKEFSLSKYDAEVIVADESVAEYFEKAANECNPKMLTNWLTSELFGQLNKASIGINECKITPSNFAKLVKLIENDTISGKIAKTVFEIMFETGKAPDKIVEEKGLVQVSDNNVLNTVIDEVIAENPESVEGYRSGKDKLFGFFVGQVMKKTGGKANPTLVNQLLKEKLSS</sequence>
<dbReference type="EC" id="6.3.5.-" evidence="1"/>
<dbReference type="EMBL" id="AE006914">
    <property type="protein sequence ID" value="AAL02731.1"/>
    <property type="molecule type" value="Genomic_DNA"/>
</dbReference>
<dbReference type="PIR" id="A97724">
    <property type="entry name" value="A97724"/>
</dbReference>
<dbReference type="RefSeq" id="WP_010976862.1">
    <property type="nucleotide sequence ID" value="NC_003103.1"/>
</dbReference>
<dbReference type="SMR" id="Q92J76"/>
<dbReference type="GeneID" id="927997"/>
<dbReference type="KEGG" id="rco:RC0193"/>
<dbReference type="PATRIC" id="fig|272944.4.peg.223"/>
<dbReference type="HOGENOM" id="CLU_019240_0_0_5"/>
<dbReference type="Proteomes" id="UP000000816">
    <property type="component" value="Chromosome"/>
</dbReference>
<dbReference type="GO" id="GO:0050566">
    <property type="term" value="F:asparaginyl-tRNA synthase (glutamine-hydrolyzing) activity"/>
    <property type="evidence" value="ECO:0007669"/>
    <property type="project" value="RHEA"/>
</dbReference>
<dbReference type="GO" id="GO:0005524">
    <property type="term" value="F:ATP binding"/>
    <property type="evidence" value="ECO:0007669"/>
    <property type="project" value="UniProtKB-KW"/>
</dbReference>
<dbReference type="GO" id="GO:0050567">
    <property type="term" value="F:glutaminyl-tRNA synthase (glutamine-hydrolyzing) activity"/>
    <property type="evidence" value="ECO:0007669"/>
    <property type="project" value="UniProtKB-UniRule"/>
</dbReference>
<dbReference type="GO" id="GO:0070681">
    <property type="term" value="P:glutaminyl-tRNAGln biosynthesis via transamidation"/>
    <property type="evidence" value="ECO:0007669"/>
    <property type="project" value="TreeGrafter"/>
</dbReference>
<dbReference type="GO" id="GO:0006412">
    <property type="term" value="P:translation"/>
    <property type="evidence" value="ECO:0007669"/>
    <property type="project" value="UniProtKB-UniRule"/>
</dbReference>
<dbReference type="FunFam" id="1.10.10.410:FF:000001">
    <property type="entry name" value="Aspartyl/glutamyl-tRNA(Asn/Gln) amidotransferase subunit B"/>
    <property type="match status" value="1"/>
</dbReference>
<dbReference type="Gene3D" id="1.10.10.410">
    <property type="match status" value="1"/>
</dbReference>
<dbReference type="Gene3D" id="1.10.150.380">
    <property type="entry name" value="GatB domain, N-terminal subdomain"/>
    <property type="match status" value="1"/>
</dbReference>
<dbReference type="HAMAP" id="MF_00121">
    <property type="entry name" value="GatB"/>
    <property type="match status" value="1"/>
</dbReference>
<dbReference type="InterPro" id="IPR017959">
    <property type="entry name" value="Asn/Gln-tRNA_amidoTrfase_suB/E"/>
</dbReference>
<dbReference type="InterPro" id="IPR006075">
    <property type="entry name" value="Asn/Gln-tRNA_Trfase_suB/E_cat"/>
</dbReference>
<dbReference type="InterPro" id="IPR018027">
    <property type="entry name" value="Asn/Gln_amidotransferase"/>
</dbReference>
<dbReference type="InterPro" id="IPR003789">
    <property type="entry name" value="Asn/Gln_tRNA_amidoTrase-B-like"/>
</dbReference>
<dbReference type="InterPro" id="IPR004413">
    <property type="entry name" value="GatB"/>
</dbReference>
<dbReference type="InterPro" id="IPR042114">
    <property type="entry name" value="GatB_C_1"/>
</dbReference>
<dbReference type="InterPro" id="IPR023168">
    <property type="entry name" value="GatB_Yqey_C_2"/>
</dbReference>
<dbReference type="InterPro" id="IPR017958">
    <property type="entry name" value="Gln-tRNA_amidoTrfase_suB_CS"/>
</dbReference>
<dbReference type="InterPro" id="IPR014746">
    <property type="entry name" value="Gln_synth/guanido_kin_cat_dom"/>
</dbReference>
<dbReference type="NCBIfam" id="TIGR00133">
    <property type="entry name" value="gatB"/>
    <property type="match status" value="1"/>
</dbReference>
<dbReference type="NCBIfam" id="NF004012">
    <property type="entry name" value="PRK05477.1-2"/>
    <property type="match status" value="1"/>
</dbReference>
<dbReference type="NCBIfam" id="NF004014">
    <property type="entry name" value="PRK05477.1-4"/>
    <property type="match status" value="1"/>
</dbReference>
<dbReference type="NCBIfam" id="NF004015">
    <property type="entry name" value="PRK05477.1-5"/>
    <property type="match status" value="1"/>
</dbReference>
<dbReference type="PANTHER" id="PTHR11659">
    <property type="entry name" value="GLUTAMYL-TRNA GLN AMIDOTRANSFERASE SUBUNIT B MITOCHONDRIAL AND PROKARYOTIC PET112-RELATED"/>
    <property type="match status" value="1"/>
</dbReference>
<dbReference type="PANTHER" id="PTHR11659:SF0">
    <property type="entry name" value="GLUTAMYL-TRNA(GLN) AMIDOTRANSFERASE SUBUNIT B, MITOCHONDRIAL"/>
    <property type="match status" value="1"/>
</dbReference>
<dbReference type="Pfam" id="PF02934">
    <property type="entry name" value="GatB_N"/>
    <property type="match status" value="1"/>
</dbReference>
<dbReference type="Pfam" id="PF02637">
    <property type="entry name" value="GatB_Yqey"/>
    <property type="match status" value="1"/>
</dbReference>
<dbReference type="SMART" id="SM00845">
    <property type="entry name" value="GatB_Yqey"/>
    <property type="match status" value="1"/>
</dbReference>
<dbReference type="SUPFAM" id="SSF89095">
    <property type="entry name" value="GatB/YqeY motif"/>
    <property type="match status" value="1"/>
</dbReference>
<dbReference type="SUPFAM" id="SSF55931">
    <property type="entry name" value="Glutamine synthetase/guanido kinase"/>
    <property type="match status" value="1"/>
</dbReference>
<dbReference type="PROSITE" id="PS01234">
    <property type="entry name" value="GATB"/>
    <property type="match status" value="1"/>
</dbReference>
<evidence type="ECO:0000255" key="1">
    <source>
        <dbReference type="HAMAP-Rule" id="MF_00121"/>
    </source>
</evidence>